<name>YQAA_ECOLI</name>
<keyword id="KW-0997">Cell inner membrane</keyword>
<keyword id="KW-1003">Cell membrane</keyword>
<keyword id="KW-0472">Membrane</keyword>
<keyword id="KW-1185">Reference proteome</keyword>
<keyword id="KW-0812">Transmembrane</keyword>
<keyword id="KW-1133">Transmembrane helix</keyword>
<protein>
    <recommendedName>
        <fullName>Inner membrane protein YqaA</fullName>
    </recommendedName>
</protein>
<organism>
    <name type="scientific">Escherichia coli (strain K12)</name>
    <dbReference type="NCBI Taxonomy" id="83333"/>
    <lineage>
        <taxon>Bacteria</taxon>
        <taxon>Pseudomonadati</taxon>
        <taxon>Pseudomonadota</taxon>
        <taxon>Gammaproteobacteria</taxon>
        <taxon>Enterobacterales</taxon>
        <taxon>Enterobacteriaceae</taxon>
        <taxon>Escherichia</taxon>
    </lineage>
</organism>
<gene>
    <name type="primary">yqaA</name>
    <name type="ordered locus">b2689</name>
    <name type="ordered locus">JW2664</name>
</gene>
<evidence type="ECO:0000255" key="1"/>
<evidence type="ECO:0000305" key="2"/>
<accession>P0ADR0</accession>
<accession>P76631</accession>
<accession>P77028</accession>
<sequence>MSEALSLFSLFASSFLSATLLPGNSEVVLVAMLLSGISHPWVLVLTATMGNSLGGLTNVILGRFFPLRKTSRWQEKATGWLKRYGAVTLLLSWMPVVGDLLCLLAGWMRISWGPVIFFLCLGKALRYVAVAAATVQGMMWWH</sequence>
<feature type="chain" id="PRO_0000169306" description="Inner membrane protein YqaA">
    <location>
        <begin position="1"/>
        <end position="142"/>
    </location>
</feature>
<feature type="topological domain" description="Cytoplasmic" evidence="1">
    <location>
        <begin position="1"/>
        <end position="2"/>
    </location>
</feature>
<feature type="transmembrane region" description="Helical" evidence="1">
    <location>
        <begin position="3"/>
        <end position="23"/>
    </location>
</feature>
<feature type="topological domain" description="Periplasmic" evidence="1">
    <location>
        <begin position="24"/>
        <end position="26"/>
    </location>
</feature>
<feature type="transmembrane region" description="Helical" evidence="1">
    <location>
        <begin position="27"/>
        <end position="47"/>
    </location>
</feature>
<feature type="topological domain" description="Cytoplasmic" evidence="1">
    <location>
        <begin position="48"/>
        <end position="86"/>
    </location>
</feature>
<feature type="transmembrane region" description="Helical" evidence="1">
    <location>
        <begin position="87"/>
        <end position="107"/>
    </location>
</feature>
<feature type="topological domain" description="Periplasmic" evidence="1">
    <location>
        <begin position="108"/>
        <end position="142"/>
    </location>
</feature>
<reference key="1">
    <citation type="journal article" date="1997" name="DNA Res.">
        <title>Construction of a contiguous 874-kb sequence of the Escherichia coli-K12 genome corresponding to 50.0-68.8 min on the linkage map and analysis of its sequence features.</title>
        <authorList>
            <person name="Yamamoto Y."/>
            <person name="Aiba H."/>
            <person name="Baba T."/>
            <person name="Hayashi K."/>
            <person name="Inada T."/>
            <person name="Isono K."/>
            <person name="Itoh T."/>
            <person name="Kimura S."/>
            <person name="Kitagawa M."/>
            <person name="Makino K."/>
            <person name="Miki T."/>
            <person name="Mitsuhashi N."/>
            <person name="Mizobuchi K."/>
            <person name="Mori H."/>
            <person name="Nakade S."/>
            <person name="Nakamura Y."/>
            <person name="Nashimoto H."/>
            <person name="Oshima T."/>
            <person name="Oyama S."/>
            <person name="Saito N."/>
            <person name="Sampei G."/>
            <person name="Satoh Y."/>
            <person name="Sivasundaram S."/>
            <person name="Tagami H."/>
            <person name="Takahashi H."/>
            <person name="Takeda J."/>
            <person name="Takemoto K."/>
            <person name="Uehara K."/>
            <person name="Wada C."/>
            <person name="Yamagata S."/>
            <person name="Horiuchi T."/>
        </authorList>
    </citation>
    <scope>NUCLEOTIDE SEQUENCE [LARGE SCALE GENOMIC DNA]</scope>
    <source>
        <strain>K12 / W3110 / ATCC 27325 / DSM 5911</strain>
    </source>
</reference>
<reference key="2">
    <citation type="journal article" date="1997" name="Science">
        <title>The complete genome sequence of Escherichia coli K-12.</title>
        <authorList>
            <person name="Blattner F.R."/>
            <person name="Plunkett G. III"/>
            <person name="Bloch C.A."/>
            <person name="Perna N.T."/>
            <person name="Burland V."/>
            <person name="Riley M."/>
            <person name="Collado-Vides J."/>
            <person name="Glasner J.D."/>
            <person name="Rode C.K."/>
            <person name="Mayhew G.F."/>
            <person name="Gregor J."/>
            <person name="Davis N.W."/>
            <person name="Kirkpatrick H.A."/>
            <person name="Goeden M.A."/>
            <person name="Rose D.J."/>
            <person name="Mau B."/>
            <person name="Shao Y."/>
        </authorList>
    </citation>
    <scope>NUCLEOTIDE SEQUENCE [LARGE SCALE GENOMIC DNA]</scope>
    <source>
        <strain>K12 / MG1655 / ATCC 47076</strain>
    </source>
</reference>
<reference key="3">
    <citation type="journal article" date="2006" name="Mol. Syst. Biol.">
        <title>Highly accurate genome sequences of Escherichia coli K-12 strains MG1655 and W3110.</title>
        <authorList>
            <person name="Hayashi K."/>
            <person name="Morooka N."/>
            <person name="Yamamoto Y."/>
            <person name="Fujita K."/>
            <person name="Isono K."/>
            <person name="Choi S."/>
            <person name="Ohtsubo E."/>
            <person name="Baba T."/>
            <person name="Wanner B.L."/>
            <person name="Mori H."/>
            <person name="Horiuchi T."/>
        </authorList>
    </citation>
    <scope>NUCLEOTIDE SEQUENCE [LARGE SCALE GENOMIC DNA]</scope>
    <source>
        <strain>K12 / W3110 / ATCC 27325 / DSM 5911</strain>
    </source>
</reference>
<reference key="4">
    <citation type="journal article" date="2005" name="Science">
        <title>Global topology analysis of the Escherichia coli inner membrane proteome.</title>
        <authorList>
            <person name="Daley D.O."/>
            <person name="Rapp M."/>
            <person name="Granseth E."/>
            <person name="Melen K."/>
            <person name="Drew D."/>
            <person name="von Heijne G."/>
        </authorList>
    </citation>
    <scope>TOPOLOGY [LARGE SCALE ANALYSIS]</scope>
    <source>
        <strain>K12 / MG1655 / ATCC 47076</strain>
    </source>
</reference>
<comment type="subcellular location">
    <subcellularLocation>
        <location>Cell inner membrane</location>
        <topology>Multi-pass membrane protein</topology>
    </subcellularLocation>
</comment>
<comment type="similarity">
    <text evidence="2">To H.influenzae HI_0489.</text>
</comment>
<proteinExistence type="evidence at protein level"/>
<dbReference type="EMBL" id="U00096">
    <property type="protein sequence ID" value="AAC75736.1"/>
    <property type="molecule type" value="Genomic_DNA"/>
</dbReference>
<dbReference type="EMBL" id="AP009048">
    <property type="protein sequence ID" value="BAA16556.2"/>
    <property type="molecule type" value="Genomic_DNA"/>
</dbReference>
<dbReference type="PIR" id="B65049">
    <property type="entry name" value="B65049"/>
</dbReference>
<dbReference type="RefSeq" id="NP_417174.1">
    <property type="nucleotide sequence ID" value="NC_000913.3"/>
</dbReference>
<dbReference type="RefSeq" id="WP_001287454.1">
    <property type="nucleotide sequence ID" value="NZ_SSZK01000020.1"/>
</dbReference>
<dbReference type="BioGRID" id="4262272">
    <property type="interactions" value="13"/>
</dbReference>
<dbReference type="FunCoup" id="P0ADR0">
    <property type="interactions" value="46"/>
</dbReference>
<dbReference type="STRING" id="511145.b2689"/>
<dbReference type="PaxDb" id="511145-b2689"/>
<dbReference type="EnsemblBacteria" id="AAC75736">
    <property type="protein sequence ID" value="AAC75736"/>
    <property type="gene ID" value="b2689"/>
</dbReference>
<dbReference type="GeneID" id="945419"/>
<dbReference type="KEGG" id="ecj:JW2664"/>
<dbReference type="KEGG" id="eco:b2689"/>
<dbReference type="KEGG" id="ecoc:C3026_14805"/>
<dbReference type="PATRIC" id="fig|1411691.4.peg.4050"/>
<dbReference type="EchoBASE" id="EB3300"/>
<dbReference type="eggNOG" id="COG1238">
    <property type="taxonomic scope" value="Bacteria"/>
</dbReference>
<dbReference type="HOGENOM" id="CLU_125997_0_0_6"/>
<dbReference type="InParanoid" id="P0ADR0"/>
<dbReference type="OMA" id="WSLLFAW"/>
<dbReference type="OrthoDB" id="9814483at2"/>
<dbReference type="PhylomeDB" id="P0ADR0"/>
<dbReference type="BioCyc" id="EcoCyc:G7407-MONOMER"/>
<dbReference type="PRO" id="PR:P0ADR0"/>
<dbReference type="Proteomes" id="UP000000625">
    <property type="component" value="Chromosome"/>
</dbReference>
<dbReference type="GO" id="GO:0005886">
    <property type="term" value="C:plasma membrane"/>
    <property type="evidence" value="ECO:0000314"/>
    <property type="project" value="EcoCyc"/>
</dbReference>
<dbReference type="GO" id="GO:0071978">
    <property type="term" value="P:bacterial-type flagellum-dependent swarming motility"/>
    <property type="evidence" value="ECO:0000315"/>
    <property type="project" value="EcoCyc"/>
</dbReference>
<dbReference type="InterPro" id="IPR051311">
    <property type="entry name" value="DedA_domain"/>
</dbReference>
<dbReference type="InterPro" id="IPR032816">
    <property type="entry name" value="VTT_dom"/>
</dbReference>
<dbReference type="PANTHER" id="PTHR42709">
    <property type="entry name" value="ALKALINE PHOSPHATASE LIKE PROTEIN"/>
    <property type="match status" value="1"/>
</dbReference>
<dbReference type="PANTHER" id="PTHR42709:SF4">
    <property type="entry name" value="INNER MEMBRANE PROTEIN YQAA"/>
    <property type="match status" value="1"/>
</dbReference>
<dbReference type="Pfam" id="PF09335">
    <property type="entry name" value="VTT_dom"/>
    <property type="match status" value="1"/>
</dbReference>